<accession>Q9ZM45</accession>
<evidence type="ECO:0000255" key="1">
    <source>
        <dbReference type="HAMAP-Rule" id="MF_00003"/>
    </source>
</evidence>
<protein>
    <recommendedName>
        <fullName evidence="1">Ribosome-binding factor A</fullName>
    </recommendedName>
</protein>
<reference key="1">
    <citation type="journal article" date="1999" name="Nature">
        <title>Genomic sequence comparison of two unrelated isolates of the human gastric pathogen Helicobacter pylori.</title>
        <authorList>
            <person name="Alm R.A."/>
            <person name="Ling L.-S.L."/>
            <person name="Moir D.T."/>
            <person name="King B.L."/>
            <person name="Brown E.D."/>
            <person name="Doig P.C."/>
            <person name="Smith D.R."/>
            <person name="Noonan B."/>
            <person name="Guild B.C."/>
            <person name="deJonge B.L."/>
            <person name="Carmel G."/>
            <person name="Tummino P.J."/>
            <person name="Caruso A."/>
            <person name="Uria-Nickelsen M."/>
            <person name="Mills D.M."/>
            <person name="Ives C."/>
            <person name="Gibson R."/>
            <person name="Merberg D."/>
            <person name="Mills S.D."/>
            <person name="Jiang Q."/>
            <person name="Taylor D.E."/>
            <person name="Vovis G.F."/>
            <person name="Trust T.J."/>
        </authorList>
    </citation>
    <scope>NUCLEOTIDE SEQUENCE [LARGE SCALE GENOMIC DNA]</scope>
    <source>
        <strain>J99 / ATCC 700824</strain>
    </source>
</reference>
<gene>
    <name evidence="1" type="primary">rbfA</name>
    <name type="ordered locus">jhp_0378</name>
</gene>
<keyword id="KW-0963">Cytoplasm</keyword>
<keyword id="KW-0690">Ribosome biogenesis</keyword>
<dbReference type="EMBL" id="AE001439">
    <property type="protein sequence ID" value="AAD05947.1"/>
    <property type="molecule type" value="Genomic_DNA"/>
</dbReference>
<dbReference type="PIR" id="F71940">
    <property type="entry name" value="F71940"/>
</dbReference>
<dbReference type="RefSeq" id="WP_000991179.1">
    <property type="nucleotide sequence ID" value="NZ_CP011330.1"/>
</dbReference>
<dbReference type="SMR" id="Q9ZM45"/>
<dbReference type="KEGG" id="hpj:jhp_0378"/>
<dbReference type="PATRIC" id="fig|85963.30.peg.633"/>
<dbReference type="eggNOG" id="COG0858">
    <property type="taxonomic scope" value="Bacteria"/>
</dbReference>
<dbReference type="Proteomes" id="UP000000804">
    <property type="component" value="Chromosome"/>
</dbReference>
<dbReference type="GO" id="GO:0005737">
    <property type="term" value="C:cytoplasm"/>
    <property type="evidence" value="ECO:0007669"/>
    <property type="project" value="UniProtKB-SubCell"/>
</dbReference>
<dbReference type="GO" id="GO:0030490">
    <property type="term" value="P:maturation of SSU-rRNA"/>
    <property type="evidence" value="ECO:0007669"/>
    <property type="project" value="UniProtKB-UniRule"/>
</dbReference>
<dbReference type="Gene3D" id="3.30.300.20">
    <property type="match status" value="1"/>
</dbReference>
<dbReference type="HAMAP" id="MF_00003">
    <property type="entry name" value="RbfA"/>
    <property type="match status" value="1"/>
</dbReference>
<dbReference type="InterPro" id="IPR015946">
    <property type="entry name" value="KH_dom-like_a/b"/>
</dbReference>
<dbReference type="InterPro" id="IPR000238">
    <property type="entry name" value="RbfA"/>
</dbReference>
<dbReference type="InterPro" id="IPR023799">
    <property type="entry name" value="RbfA_dom_sf"/>
</dbReference>
<dbReference type="InterPro" id="IPR020053">
    <property type="entry name" value="Ribosome-bd_factorA_CS"/>
</dbReference>
<dbReference type="NCBIfam" id="TIGR00082">
    <property type="entry name" value="rbfA"/>
    <property type="match status" value="1"/>
</dbReference>
<dbReference type="Pfam" id="PF02033">
    <property type="entry name" value="RBFA"/>
    <property type="match status" value="1"/>
</dbReference>
<dbReference type="SUPFAM" id="SSF89919">
    <property type="entry name" value="Ribosome-binding factor A, RbfA"/>
    <property type="match status" value="1"/>
</dbReference>
<dbReference type="PROSITE" id="PS01319">
    <property type="entry name" value="RBFA"/>
    <property type="match status" value="1"/>
</dbReference>
<organism>
    <name type="scientific">Helicobacter pylori (strain J99 / ATCC 700824)</name>
    <name type="common">Campylobacter pylori J99</name>
    <dbReference type="NCBI Taxonomy" id="85963"/>
    <lineage>
        <taxon>Bacteria</taxon>
        <taxon>Pseudomonadati</taxon>
        <taxon>Campylobacterota</taxon>
        <taxon>Epsilonproteobacteria</taxon>
        <taxon>Campylobacterales</taxon>
        <taxon>Helicobacteraceae</taxon>
        <taxon>Helicobacter</taxon>
    </lineage>
</organism>
<proteinExistence type="inferred from homology"/>
<name>RBFA_HELPJ</name>
<comment type="function">
    <text evidence="1">One of several proteins that assist in the late maturation steps of the functional core of the 30S ribosomal subunit. Associates with free 30S ribosomal subunits (but not with 30S subunits that are part of 70S ribosomes or polysomes). Required for efficient processing of 16S rRNA. May interact with the 5'-terminal helix region of 16S rRNA.</text>
</comment>
<comment type="subunit">
    <text evidence="1">Monomer. Binds 30S ribosomal subunits, but not 50S ribosomal subunits or 70S ribosomes.</text>
</comment>
<comment type="subcellular location">
    <subcellularLocation>
        <location evidence="1">Cytoplasm</location>
    </subcellularLocation>
</comment>
<comment type="similarity">
    <text evidence="1">Belongs to the RbfA family.</text>
</comment>
<sequence length="111" mass="12476">MNAHKERLESNLLELLQEALASLNDSELNSLSVTKVECSKGKHHALVFVLSSDHKILSKLKKAEGLIRQFVLQASGWFKCPKLSFVLDDSLEKQLRLDAIFNEIAKGKDND</sequence>
<feature type="chain" id="PRO_0000102673" description="Ribosome-binding factor A">
    <location>
        <begin position="1"/>
        <end position="111"/>
    </location>
</feature>